<proteinExistence type="evidence at protein level"/>
<protein>
    <recommendedName>
        <fullName>Elongation factor 2</fullName>
        <shortName>EF-2</shortName>
        <ecNumber evidence="1">3.6.5.-</ecNumber>
    </recommendedName>
</protein>
<sequence>MVNFTVDQIRAIMDKKANIRNMSVIAHVDHGKSTLTDSLVCKAGIIASARAGETRFTDTRKDEQERCITIKSTAISLFYELSENDLNFIKQSKDGSGFLINLIDSPGHVDFSSEVTAALRVTDGALVVVDCVSGVCVQTETVLRQAIAERIKPVLMMNKMDRALLELQLEPEELYQTFQRIVENVNVIISTYGEGESGPMGNIMIDPVLGTVGFGSGLHGWAFTLKQFAEMYVAKFAAKGEGQLGAAERAKKVEDMMKKLWGDRYFDPANGKFSKSANSPDGKKLPRTFCQLILDPIFKVFDAIMNFRKEETAKLIEKLDIKLDSEDKDKEGKPLLKAVMRRWLPAGDALLQMITIHLPSPVTAQKYRCELLYEGPPDDEAAMGIKSCDPKGPLMMYISKMVPTSDKGRFYAFGRVFSGVVSTGLKVRIMGPNYTPGKKEDLYLKPIQRTILMMGRYVEPIEDVPCGNIVGLVGVDQFLVKTGTITTFEHAHNMRVMKFSVSPVVRVAVEAKNPADLPKLVEGLKRLAKSDPMVQCIIEESGEHIIAGAGELHLEICLKDLEEDHACIPIKKSDPVVSYRETVSEESNVLCLSKSPNKHNRLYMKARPFPDGLAEDIDKGEVSARQELKARARYLAEKYEWDVAEARKIWCFGPDGTGPNILTDITKGVQYLNEIKDSVVAGFQWATKEGALCEENMRGVRFDVHDVTLHADAIHRGGGQIIPTARRCLYASVLTAQPRLMEPIYLVEIQCPEQVVGGIYGVLNRKRGHVFEESQVAGTPMFVVKAYLPVNESFGFTADLRSNTGGQAFPQCVFDHWQILPGDPFDNSSRPSQVVAETRKRKGLKEGIPALDNFLDKL</sequence>
<organism>
    <name type="scientific">Rattus norvegicus</name>
    <name type="common">Rat</name>
    <dbReference type="NCBI Taxonomy" id="10116"/>
    <lineage>
        <taxon>Eukaryota</taxon>
        <taxon>Metazoa</taxon>
        <taxon>Chordata</taxon>
        <taxon>Craniata</taxon>
        <taxon>Vertebrata</taxon>
        <taxon>Euteleostomi</taxon>
        <taxon>Mammalia</taxon>
        <taxon>Eutheria</taxon>
        <taxon>Euarchontoglires</taxon>
        <taxon>Glires</taxon>
        <taxon>Rodentia</taxon>
        <taxon>Myomorpha</taxon>
        <taxon>Muroidea</taxon>
        <taxon>Muridae</taxon>
        <taxon>Murinae</taxon>
        <taxon>Rattus</taxon>
    </lineage>
</organism>
<name>EF2_RAT</name>
<evidence type="ECO:0000250" key="1">
    <source>
        <dbReference type="UniProtKB" id="P13639"/>
    </source>
</evidence>
<evidence type="ECO:0000250" key="2">
    <source>
        <dbReference type="UniProtKB" id="P32324"/>
    </source>
</evidence>
<evidence type="ECO:0000250" key="3">
    <source>
        <dbReference type="UniProtKB" id="P58252"/>
    </source>
</evidence>
<evidence type="ECO:0000250" key="4">
    <source>
        <dbReference type="UniProtKB" id="Q7ZXP8"/>
    </source>
</evidence>
<evidence type="ECO:0000255" key="5">
    <source>
        <dbReference type="PROSITE-ProRule" id="PRU01059"/>
    </source>
</evidence>
<evidence type="ECO:0000269" key="6">
    <source>
    </source>
</evidence>
<evidence type="ECO:0000269" key="7">
    <source>
    </source>
</evidence>
<evidence type="ECO:0000269" key="8">
    <source ref="3"/>
</evidence>
<evidence type="ECO:0007744" key="9">
    <source>
    </source>
</evidence>
<feature type="initiator methionine" description="Removed" evidence="8">
    <location>
        <position position="1"/>
    </location>
</feature>
<feature type="chain" id="PRO_0000091004" description="Elongation factor 2">
    <location>
        <begin position="2"/>
        <end position="858"/>
    </location>
</feature>
<feature type="domain" description="tr-type G" evidence="5">
    <location>
        <begin position="17"/>
        <end position="362"/>
    </location>
</feature>
<feature type="binding site" evidence="2">
    <location>
        <begin position="26"/>
        <end position="33"/>
    </location>
    <ligand>
        <name>GTP</name>
        <dbReference type="ChEBI" id="CHEBI:37565"/>
    </ligand>
</feature>
<feature type="binding site" evidence="2">
    <location>
        <begin position="158"/>
        <end position="161"/>
    </location>
    <ligand>
        <name>GTP</name>
        <dbReference type="ChEBI" id="CHEBI:37565"/>
    </ligand>
</feature>
<feature type="binding site" evidence="2">
    <location>
        <begin position="216"/>
        <end position="218"/>
    </location>
    <ligand>
        <name>GTP</name>
        <dbReference type="ChEBI" id="CHEBI:37565"/>
    </ligand>
</feature>
<feature type="modified residue" description="Phosphothreonine" evidence="1">
    <location>
        <position position="54"/>
    </location>
</feature>
<feature type="modified residue" description="Phosphothreonine; by EEF2K" evidence="6 9">
    <location>
        <position position="57"/>
    </location>
</feature>
<feature type="modified residue" description="Phosphothreonine" evidence="9">
    <location>
        <position position="59"/>
    </location>
</feature>
<feature type="modified residue" description="N6-succinyllysine" evidence="3">
    <location>
        <position position="152"/>
    </location>
</feature>
<feature type="modified residue" description="N6-acetyllysine" evidence="1">
    <location>
        <position position="235"/>
    </location>
</feature>
<feature type="modified residue" description="N6-acetyllysine; alternate" evidence="1">
    <location>
        <position position="239"/>
    </location>
</feature>
<feature type="modified residue" description="Phosphotyrosine; by CSK" evidence="1">
    <location>
        <position position="265"/>
    </location>
</feature>
<feature type="modified residue" description="N6-acetyllysine; alternate" evidence="1">
    <location>
        <position position="272"/>
    </location>
</feature>
<feature type="modified residue" description="N6-succinyllysine; alternate" evidence="3">
    <location>
        <position position="272"/>
    </location>
</feature>
<feature type="modified residue" description="N6-acetyllysine" evidence="1">
    <location>
        <position position="275"/>
    </location>
</feature>
<feature type="modified residue" description="Phosphoserine" evidence="9">
    <location>
        <position position="325"/>
    </location>
</feature>
<feature type="modified residue" description="Phosphotyrosine; by CSK" evidence="1">
    <location>
        <position position="373"/>
    </location>
</feature>
<feature type="modified residue" description="Phosphothreonine" evidence="9">
    <location>
        <position position="435"/>
    </location>
</feature>
<feature type="modified residue" description="N6-acetyllysine" evidence="3">
    <location>
        <position position="439"/>
    </location>
</feature>
<feature type="modified residue" description="N6-acetyllysine" evidence="1">
    <location>
        <position position="445"/>
    </location>
</feature>
<feature type="modified residue" description="Phosphoserine" evidence="9">
    <location>
        <position position="502"/>
    </location>
</feature>
<feature type="modified residue" description="N6,N6,N6-trimethyllysine; by EEF2KMT" evidence="1">
    <location>
        <position position="525"/>
    </location>
</feature>
<feature type="modified residue" description="N6-succinyllysine" evidence="3">
    <location>
        <position position="572"/>
    </location>
</feature>
<feature type="modified residue" description="Phosphoserine; by CDK2" evidence="1">
    <location>
        <position position="595"/>
    </location>
</feature>
<feature type="modified residue" description="N6-acetyllysine" evidence="3">
    <location>
        <position position="619"/>
    </location>
</feature>
<feature type="modified residue" description="Diphthamide" evidence="7">
    <location>
        <position position="715"/>
    </location>
</feature>
<feature type="cross-link" description="Glycyl lysine isopeptide (Lys-Gly) (interchain with G-Cter in SUMO1); alternate" evidence="1">
    <location>
        <position position="239"/>
    </location>
</feature>
<feature type="cross-link" description="Glycyl lysine isopeptide (Lys-Gly) (interchain with G-Cter in SUMO)" evidence="1">
    <location>
        <position position="322"/>
    </location>
</feature>
<feature type="cross-link" description="Glycyl lysine isopeptide (Lys-Gly) (interchain with G-Cter in SUMO)" evidence="1">
    <location>
        <position position="529"/>
    </location>
</feature>
<dbReference type="EC" id="3.6.5.-" evidence="1"/>
<dbReference type="EMBL" id="BC066661">
    <property type="protein sequence ID" value="AAH66661.1"/>
    <property type="molecule type" value="mRNA"/>
</dbReference>
<dbReference type="EMBL" id="K03502">
    <property type="protein sequence ID" value="AAA41106.1"/>
    <property type="molecule type" value="mRNA"/>
</dbReference>
<dbReference type="EMBL" id="Y07504">
    <property type="protein sequence ID" value="CAA68805.1"/>
    <property type="molecule type" value="mRNA"/>
</dbReference>
<dbReference type="EMBL" id="U75403">
    <property type="protein sequence ID" value="AAB19107.1"/>
    <property type="molecule type" value="mRNA"/>
</dbReference>
<dbReference type="EMBL" id="AF000576">
    <property type="protein sequence ID" value="AAD05363.1"/>
    <property type="molecule type" value="mRNA"/>
</dbReference>
<dbReference type="PIR" id="S04007">
    <property type="entry name" value="EFRT2"/>
</dbReference>
<dbReference type="RefSeq" id="NP_058941.1">
    <property type="nucleotide sequence ID" value="NM_017245.3"/>
</dbReference>
<dbReference type="RefSeq" id="XP_063119189.1">
    <property type="nucleotide sequence ID" value="XM_063263119.1"/>
</dbReference>
<dbReference type="SMR" id="P05197"/>
<dbReference type="BioGRID" id="248199">
    <property type="interactions" value="11"/>
</dbReference>
<dbReference type="FunCoup" id="P05197">
    <property type="interactions" value="3153"/>
</dbReference>
<dbReference type="IntAct" id="P05197">
    <property type="interactions" value="9"/>
</dbReference>
<dbReference type="MINT" id="P05197"/>
<dbReference type="STRING" id="10116.ENSRNOP00000041821"/>
<dbReference type="GlyGen" id="P05197">
    <property type="glycosylation" value="1 site, 1 O-linked glycan (1 site)"/>
</dbReference>
<dbReference type="iPTMnet" id="P05197"/>
<dbReference type="PhosphoSitePlus" id="P05197"/>
<dbReference type="jPOST" id="P05197"/>
<dbReference type="PaxDb" id="10116-ENSRNOP00000041821"/>
<dbReference type="Ensembl" id="ENSRNOT00000047450.4">
    <property type="protein sequence ID" value="ENSRNOP00000041821.3"/>
    <property type="gene ID" value="ENSRNOG00000020266.6"/>
</dbReference>
<dbReference type="GeneID" id="29565"/>
<dbReference type="KEGG" id="rno:29565"/>
<dbReference type="UCSC" id="RGD:61979">
    <property type="organism name" value="rat"/>
</dbReference>
<dbReference type="AGR" id="RGD:61979"/>
<dbReference type="CTD" id="1938"/>
<dbReference type="RGD" id="61979">
    <property type="gene designation" value="Eef2"/>
</dbReference>
<dbReference type="eggNOG" id="KOG0469">
    <property type="taxonomic scope" value="Eukaryota"/>
</dbReference>
<dbReference type="GeneTree" id="ENSGT00940000154662"/>
<dbReference type="HOGENOM" id="CLU_002794_11_1_1"/>
<dbReference type="InParanoid" id="P05197"/>
<dbReference type="OrthoDB" id="11532at9989"/>
<dbReference type="PhylomeDB" id="P05197"/>
<dbReference type="TreeFam" id="TF300575"/>
<dbReference type="Reactome" id="R-RNO-156902">
    <property type="pathway name" value="Peptide chain elongation"/>
</dbReference>
<dbReference type="Reactome" id="R-RNO-5358493">
    <property type="pathway name" value="Synthesis of diphthamide-EEF2"/>
</dbReference>
<dbReference type="Reactome" id="R-RNO-6798695">
    <property type="pathway name" value="Neutrophil degranulation"/>
</dbReference>
<dbReference type="Reactome" id="R-RNO-8876725">
    <property type="pathway name" value="Protein methylation"/>
</dbReference>
<dbReference type="PRO" id="PR:P05197"/>
<dbReference type="Proteomes" id="UP000002494">
    <property type="component" value="Chromosome 7"/>
</dbReference>
<dbReference type="Bgee" id="ENSRNOG00000020266">
    <property type="expression patterns" value="Expressed in spleen and 19 other cell types or tissues"/>
</dbReference>
<dbReference type="GO" id="GO:0016235">
    <property type="term" value="C:aggresome"/>
    <property type="evidence" value="ECO:0007669"/>
    <property type="project" value="Ensembl"/>
</dbReference>
<dbReference type="GO" id="GO:0005737">
    <property type="term" value="C:cytoplasm"/>
    <property type="evidence" value="ECO:0000314"/>
    <property type="project" value="RGD"/>
</dbReference>
<dbReference type="GO" id="GO:0005829">
    <property type="term" value="C:cytosol"/>
    <property type="evidence" value="ECO:0000318"/>
    <property type="project" value="GO_Central"/>
</dbReference>
<dbReference type="GO" id="GO:0098978">
    <property type="term" value="C:glutamatergic synapse"/>
    <property type="evidence" value="ECO:0000314"/>
    <property type="project" value="SynGO"/>
</dbReference>
<dbReference type="GO" id="GO:0005886">
    <property type="term" value="C:plasma membrane"/>
    <property type="evidence" value="ECO:0007669"/>
    <property type="project" value="Ensembl"/>
</dbReference>
<dbReference type="GO" id="GO:0098794">
    <property type="term" value="C:postsynapse"/>
    <property type="evidence" value="ECO:0007669"/>
    <property type="project" value="GOC"/>
</dbReference>
<dbReference type="GO" id="GO:1990904">
    <property type="term" value="C:ribonucleoprotein complex"/>
    <property type="evidence" value="ECO:0000314"/>
    <property type="project" value="RGD"/>
</dbReference>
<dbReference type="GO" id="GO:0005840">
    <property type="term" value="C:ribosome"/>
    <property type="evidence" value="ECO:0000314"/>
    <property type="project" value="RGD"/>
</dbReference>
<dbReference type="GO" id="GO:0045202">
    <property type="term" value="C:synapse"/>
    <property type="evidence" value="ECO:0000266"/>
    <property type="project" value="RGD"/>
</dbReference>
<dbReference type="GO" id="GO:0008097">
    <property type="term" value="F:5S rRNA binding"/>
    <property type="evidence" value="ECO:0000314"/>
    <property type="project" value="RGD"/>
</dbReference>
<dbReference type="GO" id="GO:0051015">
    <property type="term" value="F:actin filament binding"/>
    <property type="evidence" value="ECO:0000314"/>
    <property type="project" value="RGD"/>
</dbReference>
<dbReference type="GO" id="GO:0005525">
    <property type="term" value="F:GTP binding"/>
    <property type="evidence" value="ECO:0007669"/>
    <property type="project" value="UniProtKB-KW"/>
</dbReference>
<dbReference type="GO" id="GO:0003924">
    <property type="term" value="F:GTPase activity"/>
    <property type="evidence" value="ECO:0000250"/>
    <property type="project" value="UniProtKB"/>
</dbReference>
<dbReference type="GO" id="GO:0106222">
    <property type="term" value="F:lncRNA binding"/>
    <property type="evidence" value="ECO:0000266"/>
    <property type="project" value="RGD"/>
</dbReference>
<dbReference type="GO" id="GO:0002039">
    <property type="term" value="F:p53 binding"/>
    <property type="evidence" value="ECO:0000353"/>
    <property type="project" value="RGD"/>
</dbReference>
<dbReference type="GO" id="GO:0019901">
    <property type="term" value="F:protein kinase binding"/>
    <property type="evidence" value="ECO:0000266"/>
    <property type="project" value="RGD"/>
</dbReference>
<dbReference type="GO" id="GO:0043022">
    <property type="term" value="F:ribosome binding"/>
    <property type="evidence" value="ECO:0000314"/>
    <property type="project" value="RGD"/>
</dbReference>
<dbReference type="GO" id="GO:0003723">
    <property type="term" value="F:RNA binding"/>
    <property type="evidence" value="ECO:0000314"/>
    <property type="project" value="RGD"/>
</dbReference>
<dbReference type="GO" id="GO:0003746">
    <property type="term" value="F:translation elongation factor activity"/>
    <property type="evidence" value="ECO:0000250"/>
    <property type="project" value="UniProtKB"/>
</dbReference>
<dbReference type="GO" id="GO:1990416">
    <property type="term" value="P:cellular response to brain-derived neurotrophic factor stimulus"/>
    <property type="evidence" value="ECO:0000270"/>
    <property type="project" value="RGD"/>
</dbReference>
<dbReference type="GO" id="GO:0014009">
    <property type="term" value="P:glial cell proliferation"/>
    <property type="evidence" value="ECO:0000270"/>
    <property type="project" value="RGD"/>
</dbReference>
<dbReference type="GO" id="GO:0002244">
    <property type="term" value="P:hematopoietic progenitor cell differentiation"/>
    <property type="evidence" value="ECO:0000266"/>
    <property type="project" value="RGD"/>
</dbReference>
<dbReference type="GO" id="GO:2000767">
    <property type="term" value="P:positive regulation of cytoplasmic translation"/>
    <property type="evidence" value="ECO:0000315"/>
    <property type="project" value="RGD"/>
</dbReference>
<dbReference type="GO" id="GO:0045727">
    <property type="term" value="P:positive regulation of translation"/>
    <property type="evidence" value="ECO:0000314"/>
    <property type="project" value="RGD"/>
</dbReference>
<dbReference type="GO" id="GO:0034976">
    <property type="term" value="P:response to endoplasmic reticulum stress"/>
    <property type="evidence" value="ECO:0000270"/>
    <property type="project" value="RGD"/>
</dbReference>
<dbReference type="GO" id="GO:0032355">
    <property type="term" value="P:response to estradiol"/>
    <property type="evidence" value="ECO:0000270"/>
    <property type="project" value="RGD"/>
</dbReference>
<dbReference type="GO" id="GO:0045471">
    <property type="term" value="P:response to ethanol"/>
    <property type="evidence" value="ECO:0000270"/>
    <property type="project" value="RGD"/>
</dbReference>
<dbReference type="GO" id="GO:0051593">
    <property type="term" value="P:response to folic acid"/>
    <property type="evidence" value="ECO:0000270"/>
    <property type="project" value="RGD"/>
</dbReference>
<dbReference type="GO" id="GO:0042542">
    <property type="term" value="P:response to hydrogen peroxide"/>
    <property type="evidence" value="ECO:0000270"/>
    <property type="project" value="RGD"/>
</dbReference>
<dbReference type="GO" id="GO:0002931">
    <property type="term" value="P:response to ischemia"/>
    <property type="evidence" value="ECO:0000270"/>
    <property type="project" value="RGD"/>
</dbReference>
<dbReference type="GO" id="GO:0009410">
    <property type="term" value="P:response to xenobiotic stimulus"/>
    <property type="evidence" value="ECO:0000270"/>
    <property type="project" value="RGD"/>
</dbReference>
<dbReference type="GO" id="GO:0035914">
    <property type="term" value="P:skeletal muscle cell differentiation"/>
    <property type="evidence" value="ECO:0000270"/>
    <property type="project" value="RGD"/>
</dbReference>
<dbReference type="GO" id="GO:0003009">
    <property type="term" value="P:skeletal muscle contraction"/>
    <property type="evidence" value="ECO:0000270"/>
    <property type="project" value="RGD"/>
</dbReference>
<dbReference type="GO" id="GO:0140242">
    <property type="term" value="P:translation at postsynapse"/>
    <property type="evidence" value="ECO:0000314"/>
    <property type="project" value="SynGO"/>
</dbReference>
<dbReference type="GO" id="GO:0006414">
    <property type="term" value="P:translational elongation"/>
    <property type="evidence" value="ECO:0000250"/>
    <property type="project" value="UniProtKB"/>
</dbReference>
<dbReference type="CDD" id="cd01681">
    <property type="entry name" value="aeEF2_snRNP_like_IV"/>
    <property type="match status" value="1"/>
</dbReference>
<dbReference type="CDD" id="cd04096">
    <property type="entry name" value="eEF2_snRNP_like_C"/>
    <property type="match status" value="1"/>
</dbReference>
<dbReference type="CDD" id="cd01885">
    <property type="entry name" value="EF2"/>
    <property type="match status" value="1"/>
</dbReference>
<dbReference type="CDD" id="cd16261">
    <property type="entry name" value="EF2_snRNP_III"/>
    <property type="match status" value="1"/>
</dbReference>
<dbReference type="CDD" id="cd03700">
    <property type="entry name" value="EF2_snRNP_like_II"/>
    <property type="match status" value="1"/>
</dbReference>
<dbReference type="FunFam" id="2.40.30.10:FF:000010">
    <property type="entry name" value="Translation elongation factor 2"/>
    <property type="match status" value="1"/>
</dbReference>
<dbReference type="FunFam" id="3.30.230.10:FF:000006">
    <property type="entry name" value="Translation elongation factor 2"/>
    <property type="match status" value="1"/>
</dbReference>
<dbReference type="FunFam" id="3.30.70.240:FF:000003">
    <property type="entry name" value="Translation elongation factor 2"/>
    <property type="match status" value="1"/>
</dbReference>
<dbReference type="FunFam" id="3.30.70.870:FF:000002">
    <property type="entry name" value="Translation elongation factor 2"/>
    <property type="match status" value="1"/>
</dbReference>
<dbReference type="FunFam" id="3.40.50.300:FF:000058">
    <property type="entry name" value="Translation elongation factor 2"/>
    <property type="match status" value="1"/>
</dbReference>
<dbReference type="Gene3D" id="3.30.230.10">
    <property type="match status" value="1"/>
</dbReference>
<dbReference type="Gene3D" id="3.30.70.240">
    <property type="match status" value="1"/>
</dbReference>
<dbReference type="Gene3D" id="3.30.70.870">
    <property type="entry name" value="Elongation Factor G (Translational Gtpase), domain 3"/>
    <property type="match status" value="1"/>
</dbReference>
<dbReference type="Gene3D" id="3.40.50.300">
    <property type="entry name" value="P-loop containing nucleotide triphosphate hydrolases"/>
    <property type="match status" value="1"/>
</dbReference>
<dbReference type="Gene3D" id="2.40.30.10">
    <property type="entry name" value="Translation factors"/>
    <property type="match status" value="1"/>
</dbReference>
<dbReference type="InterPro" id="IPR041095">
    <property type="entry name" value="EFG_II"/>
</dbReference>
<dbReference type="InterPro" id="IPR035647">
    <property type="entry name" value="EFG_III/V"/>
</dbReference>
<dbReference type="InterPro" id="IPR000640">
    <property type="entry name" value="EFG_V-like"/>
</dbReference>
<dbReference type="InterPro" id="IPR004161">
    <property type="entry name" value="EFTu-like_2"/>
</dbReference>
<dbReference type="InterPro" id="IPR031157">
    <property type="entry name" value="G_TR_CS"/>
</dbReference>
<dbReference type="InterPro" id="IPR027417">
    <property type="entry name" value="P-loop_NTPase"/>
</dbReference>
<dbReference type="InterPro" id="IPR020568">
    <property type="entry name" value="Ribosomal_Su5_D2-typ_SF"/>
</dbReference>
<dbReference type="InterPro" id="IPR014721">
    <property type="entry name" value="Ribsml_uS5_D2-typ_fold_subgr"/>
</dbReference>
<dbReference type="InterPro" id="IPR005225">
    <property type="entry name" value="Small_GTP-bd"/>
</dbReference>
<dbReference type="InterPro" id="IPR000795">
    <property type="entry name" value="T_Tr_GTP-bd_dom"/>
</dbReference>
<dbReference type="InterPro" id="IPR009000">
    <property type="entry name" value="Transl_B-barrel_sf"/>
</dbReference>
<dbReference type="InterPro" id="IPR005517">
    <property type="entry name" value="Transl_elong_EFG/EF2_IV"/>
</dbReference>
<dbReference type="NCBIfam" id="TIGR00231">
    <property type="entry name" value="small_GTP"/>
    <property type="match status" value="1"/>
</dbReference>
<dbReference type="PANTHER" id="PTHR42908:SF35">
    <property type="entry name" value="ELONGATION FACTOR 2"/>
    <property type="match status" value="1"/>
</dbReference>
<dbReference type="PANTHER" id="PTHR42908">
    <property type="entry name" value="TRANSLATION ELONGATION FACTOR-RELATED"/>
    <property type="match status" value="1"/>
</dbReference>
<dbReference type="Pfam" id="PF00679">
    <property type="entry name" value="EFG_C"/>
    <property type="match status" value="1"/>
</dbReference>
<dbReference type="Pfam" id="PF14492">
    <property type="entry name" value="EFG_III"/>
    <property type="match status" value="1"/>
</dbReference>
<dbReference type="Pfam" id="PF03764">
    <property type="entry name" value="EFG_IV"/>
    <property type="match status" value="1"/>
</dbReference>
<dbReference type="Pfam" id="PF00009">
    <property type="entry name" value="GTP_EFTU"/>
    <property type="match status" value="1"/>
</dbReference>
<dbReference type="Pfam" id="PF03144">
    <property type="entry name" value="GTP_EFTU_D2"/>
    <property type="match status" value="1"/>
</dbReference>
<dbReference type="PRINTS" id="PR00315">
    <property type="entry name" value="ELONGATNFCT"/>
</dbReference>
<dbReference type="SMART" id="SM00838">
    <property type="entry name" value="EFG_C"/>
    <property type="match status" value="1"/>
</dbReference>
<dbReference type="SMART" id="SM00889">
    <property type="entry name" value="EFG_IV"/>
    <property type="match status" value="1"/>
</dbReference>
<dbReference type="SUPFAM" id="SSF54980">
    <property type="entry name" value="EF-G C-terminal domain-like"/>
    <property type="match status" value="2"/>
</dbReference>
<dbReference type="SUPFAM" id="SSF52540">
    <property type="entry name" value="P-loop containing nucleoside triphosphate hydrolases"/>
    <property type="match status" value="1"/>
</dbReference>
<dbReference type="SUPFAM" id="SSF54211">
    <property type="entry name" value="Ribosomal protein S5 domain 2-like"/>
    <property type="match status" value="1"/>
</dbReference>
<dbReference type="SUPFAM" id="SSF50447">
    <property type="entry name" value="Translation proteins"/>
    <property type="match status" value="1"/>
</dbReference>
<dbReference type="PROSITE" id="PS00301">
    <property type="entry name" value="G_TR_1"/>
    <property type="match status" value="1"/>
</dbReference>
<dbReference type="PROSITE" id="PS51722">
    <property type="entry name" value="G_TR_2"/>
    <property type="match status" value="1"/>
</dbReference>
<accession>P05197</accession>
<accession>P97619</accession>
<gene>
    <name type="primary">Eef2</name>
</gene>
<keyword id="KW-0007">Acetylation</keyword>
<keyword id="KW-0963">Cytoplasm</keyword>
<keyword id="KW-0903">Direct protein sequencing</keyword>
<keyword id="KW-0251">Elongation factor</keyword>
<keyword id="KW-0342">GTP-binding</keyword>
<keyword id="KW-0378">Hydrolase</keyword>
<keyword id="KW-1017">Isopeptide bond</keyword>
<keyword id="KW-0488">Methylation</keyword>
<keyword id="KW-0547">Nucleotide-binding</keyword>
<keyword id="KW-0539">Nucleus</keyword>
<keyword id="KW-0597">Phosphoprotein</keyword>
<keyword id="KW-0648">Protein biosynthesis</keyword>
<keyword id="KW-1185">Reference proteome</keyword>
<keyword id="KW-0832">Ubl conjugation</keyword>
<reference key="1">
    <citation type="journal article" date="2004" name="Genome Res.">
        <title>The status, quality, and expansion of the NIH full-length cDNA project: the Mammalian Gene Collection (MGC).</title>
        <authorList>
            <consortium name="The MGC Project Team"/>
        </authorList>
    </citation>
    <scope>NUCLEOTIDE SEQUENCE [LARGE SCALE MRNA]</scope>
    <source>
        <tissue>Prostate</tissue>
    </source>
</reference>
<reference key="2">
    <citation type="journal article" date="1989" name="FEBS Lett.">
        <title>Primary structure of rat liver elongation factor 2 deduced from the cDNA sequence.</title>
        <authorList>
            <person name="Oleinikov A.V."/>
            <person name="Jokhadze G.G."/>
            <person name="Alakhov Y.B."/>
        </authorList>
    </citation>
    <scope>NUCLEOTIDE SEQUENCE [MRNA] OF 1-694</scope>
    <source>
        <tissue>Liver</tissue>
    </source>
</reference>
<reference key="3">
    <citation type="submission" date="2009-06" db="UniProtKB">
        <authorList>
            <person name="Bienvenut W.V."/>
            <person name="von Kriegsheim A."/>
            <person name="Kolch W."/>
        </authorList>
    </citation>
    <scope>PROTEIN SEQUENCE OF 2-10 AND 581-594</scope>
    <scope>CLEAVAGE OF INITIATOR METHIONINE</scope>
    <scope>IDENTIFICATION BY MASS SPECTROMETRY</scope>
    <source>
        <tissue>Fibroblast</tissue>
    </source>
</reference>
<reference key="4">
    <citation type="submission" date="2006-11" db="UniProtKB">
        <authorList>
            <person name="Lubec G."/>
            <person name="Afjehi-Sadat L."/>
        </authorList>
    </citation>
    <scope>PROTEIN SEQUENCE OF 163-180; 288-299 AND 606-625</scope>
    <scope>IDENTIFICATION BY MASS SPECTROMETRY</scope>
    <source>
        <strain>Sprague-Dawley</strain>
        <tissue>Spinal cord</tissue>
    </source>
</reference>
<reference key="5">
    <citation type="journal article" date="1986" name="Proc. Natl. Acad. Sci. U.S.A.">
        <title>Amino acid sequence of mammalian elongation factor 2 deduced from the cDNA sequence: homology with GTP-binding proteins.</title>
        <authorList>
            <person name="Kohno K."/>
            <person name="Uchida T."/>
            <person name="Ohkubo H."/>
            <person name="Nakanishi S."/>
            <person name="Nakanishi T."/>
            <person name="Fukui T."/>
            <person name="Ohtsuka E."/>
            <person name="Ikehara M."/>
            <person name="Okada Y."/>
        </authorList>
    </citation>
    <scope>NUCLEOTIDE SEQUENCE [MRNA] OF 516-858</scope>
</reference>
<reference key="6">
    <citation type="submission" date="1996-10" db="EMBL/GenBank/DDBJ databases">
        <authorList>
            <person name="Adams L.A."/>
            <person name="Werny I."/>
            <person name="Schwartz S.M."/>
        </authorList>
    </citation>
    <scope>NUCLEOTIDE SEQUENCE [MRNA] OF 508-558</scope>
    <source>
        <strain>Wistar Kyoto</strain>
        <tissue>Aortic smooth muscle</tissue>
    </source>
</reference>
<reference key="7">
    <citation type="submission" date="1997-05" db="EMBL/GenBank/DDBJ databases">
        <authorList>
            <person name="Too C.K.L."/>
        </authorList>
    </citation>
    <scope>NUCLEOTIDE SEQUENCE [MRNA] OF 550-858</scope>
    <source>
        <strain>Noble</strain>
    </source>
</reference>
<reference key="8">
    <citation type="journal article" date="1974" name="J. Biol. Chem.">
        <title>Elongation factor 2. Amino acid sequence at the site of adenosine diphosphate ribosylation.</title>
        <authorList>
            <person name="Robinson E.A."/>
            <person name="Henriksen O."/>
            <person name="Maxwell E.S."/>
        </authorList>
    </citation>
    <scope>PROTEIN SEQUENCE OF 702-716</scope>
    <scope>DIPHTHAMIDE AT HIS-715</scope>
    <source>
        <tissue>Liver</tissue>
    </source>
</reference>
<reference key="9">
    <citation type="journal article" date="1987" name="J. Biol. Chem.">
        <title>Identification of the major Mr 100,000 substrate for calmodulin-dependent protein kinase III in mammalian cells as elongation factor-2.</title>
        <authorList>
            <person name="Nairn A.C."/>
            <person name="Palfrey H.C."/>
        </authorList>
    </citation>
    <scope>PROTEIN SEQUENCE OF 3-19 AND 51-60</scope>
    <scope>PHOSPHORYLATION</scope>
    <source>
        <tissue>Pancreas</tissue>
    </source>
</reference>
<reference key="10">
    <citation type="journal article" date="2012" name="Nat. Commun.">
        <title>Quantitative maps of protein phosphorylation sites across 14 different rat organs and tissues.</title>
        <authorList>
            <person name="Lundby A."/>
            <person name="Secher A."/>
            <person name="Lage K."/>
            <person name="Nordsborg N.B."/>
            <person name="Dmytriyev A."/>
            <person name="Lundby C."/>
            <person name="Olsen J.V."/>
        </authorList>
    </citation>
    <scope>PHOSPHORYLATION [LARGE SCALE ANALYSIS] AT THR-57; THR-59; SER-325; THR-435 AND SER-502</scope>
    <scope>IDENTIFICATION BY MASS SPECTROMETRY [LARGE SCALE ANALYSIS]</scope>
</reference>
<comment type="function">
    <text evidence="1">Catalyzes the GTP-dependent ribosomal translocation step during translation elongation. During this step, the ribosome changes from the pre-translocational (PRE) to the post-translocational (POST) state as the newly formed A-site-bound peptidyl-tRNA and P-site-bound deacylated tRNA move to the P and E sites, respectively. Catalyzes the coordinated movement of the two tRNA molecules, the mRNA and conformational changes in the ribosome.</text>
</comment>
<comment type="catalytic activity">
    <reaction evidence="1">
        <text>GTP + H2O = GDP + phosphate + H(+)</text>
        <dbReference type="Rhea" id="RHEA:19669"/>
        <dbReference type="ChEBI" id="CHEBI:15377"/>
        <dbReference type="ChEBI" id="CHEBI:15378"/>
        <dbReference type="ChEBI" id="CHEBI:37565"/>
        <dbReference type="ChEBI" id="CHEBI:43474"/>
        <dbReference type="ChEBI" id="CHEBI:58189"/>
    </reaction>
    <physiologicalReaction direction="left-to-right" evidence="1">
        <dbReference type="Rhea" id="RHEA:19670"/>
    </physiologicalReaction>
</comment>
<comment type="subunit">
    <text evidence="1 4">Binds to 80S ribosomes. Actively translating ribosomes show mutually exclusive binding of eIF5a (EIF5A or EIF5A2) and EEF2/eEF2. Interacts with SERBP1; interaction sequesters EEF2/eEF2 at the A-site of the ribosome, thereby blocking the interaction sites of the mRNA-tRNA complex, promoting ribosome stabilization and hibernation (By similarity). Interacts with HABP4; interaction takes place at the A-site of hibernating ribosomes and promotes ribosome stabilization (By similarity). Component of the mRNA surveillance SURF complex, at least composed of ERF1, ERF3 (ERF3A or ERF3B), EEF2, UPF1/RENT1, SMG1, SMG8 and SMG9. Interacts with RBPMS2 (By similarity).</text>
</comment>
<comment type="subcellular location">
    <subcellularLocation>
        <location evidence="1">Cytoplasm</location>
    </subcellularLocation>
    <subcellularLocation>
        <location evidence="1">Nucleus</location>
    </subcellularLocation>
    <text evidence="1">Phosphorylation by CSK promotes cleavage and SUMOylation-dependent nuclear translocation of the C-terminal cleavage product.</text>
</comment>
<comment type="PTM">
    <text evidence="7">Diphthamide is 2-[3-carboxyamido-3-(trimethyl-ammonio)propyl]histidine.</text>
</comment>
<comment type="PTM">
    <text evidence="1">Phosphorylation by EF-2 kinase completely inactivates EF-2; it requires prior phosphorylation by CDK2 at Ser-595 during mitotic prometaphase. Phosphorylation by CSK promotes SUMOylation, proteolytic cleavage, and nuclear translocation if the C-terminal fragment.</text>
</comment>
<comment type="PTM">
    <text evidence="1">Proteolytically processed at two sites following phosphorylation by CSK.</text>
</comment>
<comment type="PTM">
    <text evidence="1">SUMOylated following phosphorylation by CSK, promotes proteolytic cleavage.</text>
</comment>
<comment type="PTM">
    <text evidence="1">ISGylated.</text>
</comment>
<comment type="similarity">
    <text evidence="5">Belongs to the TRAFAC class translation factor GTPase superfamily. Classic translation factor GTPase family. EF-G/EF-2 subfamily.</text>
</comment>